<accession>Q9X2H3</accession>
<proteinExistence type="inferred from homology"/>
<organism>
    <name type="scientific">Thermotoga maritima (strain ATCC 43589 / DSM 3109 / JCM 10099 / NBRC 100826 / MSB8)</name>
    <dbReference type="NCBI Taxonomy" id="243274"/>
    <lineage>
        <taxon>Bacteria</taxon>
        <taxon>Thermotogati</taxon>
        <taxon>Thermotogota</taxon>
        <taxon>Thermotogae</taxon>
        <taxon>Thermotogales</taxon>
        <taxon>Thermotogaceae</taxon>
        <taxon>Thermotoga</taxon>
    </lineage>
</organism>
<sequence length="161" mass="19483">MDYYQWRKKNRGKKRNLQAKKPLNYALRLLKYRVRFEDELRERLKKQGFADEEVESTITTLKKQGYLDDEKAAYLFALDEMRLKLFGPRVVKMKLKSLGVDEEIIERAIEKALEEIDFHEELKRLKGRFKDRWELRDYLYRRGFDSSLIEEILNKIDGGEE</sequence>
<dbReference type="EMBL" id="AE000512">
    <property type="protein sequence ID" value="AAD36920.1"/>
    <property type="molecule type" value="Genomic_DNA"/>
</dbReference>
<dbReference type="PIR" id="C72201">
    <property type="entry name" value="C72201"/>
</dbReference>
<dbReference type="RefSeq" id="NP_229654.1">
    <property type="nucleotide sequence ID" value="NC_000853.1"/>
</dbReference>
<dbReference type="RefSeq" id="WP_010865419.1">
    <property type="nucleotide sequence ID" value="NZ_CP011107.1"/>
</dbReference>
<dbReference type="SMR" id="Q9X2H3"/>
<dbReference type="FunCoup" id="Q9X2H3">
    <property type="interactions" value="2"/>
</dbReference>
<dbReference type="STRING" id="243274.TM_1858"/>
<dbReference type="PaxDb" id="243274-THEMA_04880"/>
<dbReference type="EnsemblBacteria" id="AAD36920">
    <property type="protein sequence ID" value="AAD36920"/>
    <property type="gene ID" value="TM_1858"/>
</dbReference>
<dbReference type="KEGG" id="tma:TM1858"/>
<dbReference type="KEGG" id="tmm:Tmari_1873"/>
<dbReference type="KEGG" id="tmw:THMA_1908"/>
<dbReference type="eggNOG" id="COG2137">
    <property type="taxonomic scope" value="Bacteria"/>
</dbReference>
<dbReference type="InParanoid" id="Q9X2H3"/>
<dbReference type="OrthoDB" id="9794014at2"/>
<dbReference type="Proteomes" id="UP000008183">
    <property type="component" value="Chromosome"/>
</dbReference>
<dbReference type="GO" id="GO:0005737">
    <property type="term" value="C:cytoplasm"/>
    <property type="evidence" value="ECO:0007669"/>
    <property type="project" value="UniProtKB-SubCell"/>
</dbReference>
<dbReference type="GO" id="GO:0006282">
    <property type="term" value="P:regulation of DNA repair"/>
    <property type="evidence" value="ECO:0007669"/>
    <property type="project" value="UniProtKB-UniRule"/>
</dbReference>
<dbReference type="Gene3D" id="1.10.10.10">
    <property type="entry name" value="Winged helix-like DNA-binding domain superfamily/Winged helix DNA-binding domain"/>
    <property type="match status" value="2"/>
</dbReference>
<dbReference type="HAMAP" id="MF_01114">
    <property type="entry name" value="RecX"/>
    <property type="match status" value="1"/>
</dbReference>
<dbReference type="InterPro" id="IPR053926">
    <property type="entry name" value="RecX_HTH_1st"/>
</dbReference>
<dbReference type="InterPro" id="IPR053924">
    <property type="entry name" value="RecX_HTH_2nd"/>
</dbReference>
<dbReference type="InterPro" id="IPR003783">
    <property type="entry name" value="Regulatory_RecX"/>
</dbReference>
<dbReference type="InterPro" id="IPR036388">
    <property type="entry name" value="WH-like_DNA-bd_sf"/>
</dbReference>
<dbReference type="PANTHER" id="PTHR33602">
    <property type="entry name" value="REGULATORY PROTEIN RECX FAMILY PROTEIN"/>
    <property type="match status" value="1"/>
</dbReference>
<dbReference type="PANTHER" id="PTHR33602:SF1">
    <property type="entry name" value="REGULATORY PROTEIN RECX FAMILY PROTEIN"/>
    <property type="match status" value="1"/>
</dbReference>
<dbReference type="Pfam" id="PF21982">
    <property type="entry name" value="RecX_HTH1"/>
    <property type="match status" value="1"/>
</dbReference>
<dbReference type="Pfam" id="PF02631">
    <property type="entry name" value="RecX_HTH2"/>
    <property type="match status" value="1"/>
</dbReference>
<name>RECX_THEMA</name>
<evidence type="ECO:0000250" key="1"/>
<evidence type="ECO:0000305" key="2"/>
<protein>
    <recommendedName>
        <fullName>Regulatory protein RecX</fullName>
    </recommendedName>
</protein>
<keyword id="KW-0963">Cytoplasm</keyword>
<keyword id="KW-1185">Reference proteome</keyword>
<gene>
    <name type="primary">recX</name>
    <name type="ordered locus">TM_1858</name>
</gene>
<feature type="chain" id="PRO_0000162486" description="Regulatory protein RecX">
    <location>
        <begin position="1"/>
        <end position="161"/>
    </location>
</feature>
<reference key="1">
    <citation type="journal article" date="1999" name="Nature">
        <title>Evidence for lateral gene transfer between Archaea and Bacteria from genome sequence of Thermotoga maritima.</title>
        <authorList>
            <person name="Nelson K.E."/>
            <person name="Clayton R.A."/>
            <person name="Gill S.R."/>
            <person name="Gwinn M.L."/>
            <person name="Dodson R.J."/>
            <person name="Haft D.H."/>
            <person name="Hickey E.K."/>
            <person name="Peterson J.D."/>
            <person name="Nelson W.C."/>
            <person name="Ketchum K.A."/>
            <person name="McDonald L.A."/>
            <person name="Utterback T.R."/>
            <person name="Malek J.A."/>
            <person name="Linher K.D."/>
            <person name="Garrett M.M."/>
            <person name="Stewart A.M."/>
            <person name="Cotton M.D."/>
            <person name="Pratt M.S."/>
            <person name="Phillips C.A."/>
            <person name="Richardson D.L."/>
            <person name="Heidelberg J.F."/>
            <person name="Sutton G.G."/>
            <person name="Fleischmann R.D."/>
            <person name="Eisen J.A."/>
            <person name="White O."/>
            <person name="Salzberg S.L."/>
            <person name="Smith H.O."/>
            <person name="Venter J.C."/>
            <person name="Fraser C.M."/>
        </authorList>
    </citation>
    <scope>NUCLEOTIDE SEQUENCE [LARGE SCALE GENOMIC DNA]</scope>
    <source>
        <strain>ATCC 43589 / DSM 3109 / JCM 10099 / NBRC 100826 / MSB8</strain>
    </source>
</reference>
<comment type="function">
    <text evidence="1">Modulates RecA activity.</text>
</comment>
<comment type="subcellular location">
    <subcellularLocation>
        <location evidence="2">Cytoplasm</location>
    </subcellularLocation>
</comment>
<comment type="similarity">
    <text evidence="2">Belongs to the RecX family.</text>
</comment>